<dbReference type="EMBL" id="M32991">
    <property type="protein sequence ID" value="AAA45752.1"/>
    <property type="status" value="ALT_INIT"/>
    <property type="molecule type" value="Genomic_DNA"/>
</dbReference>
<dbReference type="PIR" id="D33746">
    <property type="entry name" value="SAVLWD"/>
</dbReference>
<dbReference type="SMR" id="P17195"/>
<dbReference type="GlyCosmos" id="P17195">
    <property type="glycosylation" value="1 site, No reported glycans"/>
</dbReference>
<dbReference type="Proteomes" id="UP000007558">
    <property type="component" value="Genome"/>
</dbReference>
<dbReference type="GO" id="GO:0016020">
    <property type="term" value="C:membrane"/>
    <property type="evidence" value="ECO:0007669"/>
    <property type="project" value="UniProtKB-KW"/>
</dbReference>
<dbReference type="GO" id="GO:0019031">
    <property type="term" value="C:viral envelope"/>
    <property type="evidence" value="ECO:0007669"/>
    <property type="project" value="UniProtKB-KW"/>
</dbReference>
<dbReference type="GO" id="GO:0055036">
    <property type="term" value="C:virion membrane"/>
    <property type="evidence" value="ECO:0007669"/>
    <property type="project" value="UniProtKB-SubCell"/>
</dbReference>
<dbReference type="GO" id="GO:0039663">
    <property type="term" value="P:membrane fusion involved in viral entry into host cell"/>
    <property type="evidence" value="ECO:0007669"/>
    <property type="project" value="UniProtKB-KW"/>
</dbReference>
<dbReference type="GO" id="GO:0046718">
    <property type="term" value="P:symbiont entry into host cell"/>
    <property type="evidence" value="ECO:0007669"/>
    <property type="project" value="UniProtKB-KW"/>
</dbReference>
<dbReference type="GO" id="GO:0019062">
    <property type="term" value="P:virion attachment to host cell"/>
    <property type="evidence" value="ECO:0007669"/>
    <property type="project" value="UniProtKB-KW"/>
</dbReference>
<dbReference type="InterPro" id="IPR000349">
    <property type="entry name" value="HBV_HBSAG"/>
</dbReference>
<dbReference type="Pfam" id="PF00695">
    <property type="entry name" value="vMSA"/>
    <property type="match status" value="2"/>
</dbReference>
<keyword id="KW-0024">Alternative initiation</keyword>
<keyword id="KW-1168">Fusion of virus membrane with host membrane</keyword>
<keyword id="KW-0325">Glycoprotein</keyword>
<keyword id="KW-0945">Host-virus interaction</keyword>
<keyword id="KW-0449">Lipoprotein</keyword>
<keyword id="KW-0472">Membrane</keyword>
<keyword id="KW-0519">Myristate</keyword>
<keyword id="KW-0597">Phosphoprotein</keyword>
<keyword id="KW-0812">Transmembrane</keyword>
<keyword id="KW-1133">Transmembrane helix</keyword>
<keyword id="KW-1161">Viral attachment to host cell</keyword>
<keyword id="KW-0261">Viral envelope protein</keyword>
<keyword id="KW-1162">Viral penetration into host cytoplasm</keyword>
<keyword id="KW-0946">Virion</keyword>
<keyword id="KW-1160">Virus entry into host cell</keyword>
<organism>
    <name type="scientific">Duck hepatitis B virus (isolate white Shanghai duck S31)</name>
    <name type="common">DHBV</name>
    <dbReference type="NCBI Taxonomy" id="10440"/>
    <lineage>
        <taxon>Viruses</taxon>
        <taxon>Riboviria</taxon>
        <taxon>Pararnavirae</taxon>
        <taxon>Artverviricota</taxon>
        <taxon>Revtraviricetes</taxon>
        <taxon>Blubervirales</taxon>
        <taxon>Hepadnaviridae</taxon>
        <taxon>Avihepadnavirus</taxon>
        <taxon>Duck hepatitis B virus</taxon>
    </lineage>
</organism>
<reference key="1">
    <citation type="journal article" date="1989" name="Virology">
        <title>Molecular cloning and sequence analysis of duck hepatitis B virus genomes of a new variant isolated from Shanghai ducks.</title>
        <authorList>
            <person name="Uchida M."/>
            <person name="Esumi M."/>
            <person name="Shikata T."/>
        </authorList>
    </citation>
    <scope>NUCLEOTIDE SEQUENCE [GENOMIC DNA]</scope>
</reference>
<evidence type="ECO:0000250" key="1"/>
<evidence type="ECO:0000255" key="2"/>
<evidence type="ECO:0000256" key="3">
    <source>
        <dbReference type="SAM" id="MobiDB-lite"/>
    </source>
</evidence>
<evidence type="ECO:0000305" key="4"/>
<gene>
    <name type="primary">S</name>
</gene>
<feature type="initiator methionine" description="Removed; by host" evidence="1">
    <location>
        <position position="1"/>
    </location>
</feature>
<feature type="chain" id="PRO_0000038081" description="Large envelope protein">
    <location>
        <begin position="2"/>
        <end position="330"/>
    </location>
</feature>
<feature type="chain" id="PRO_0000322199" description="Truncated S protein">
    <location>
        <begin position="164"/>
        <end position="240" status="uncertain"/>
    </location>
</feature>
<feature type="topological domain" description="Cytoplasmic; in internal conformation" evidence="2">
    <location>
        <begin position="2"/>
        <end position="238"/>
    </location>
</feature>
<feature type="topological domain" description="Extracellular; in external conformation" evidence="2">
    <location>
        <begin position="2"/>
        <end position="165"/>
    </location>
</feature>
<feature type="transmembrane region" description="Helical; Name=TM1; Note=In external conformation" evidence="2">
    <location>
        <begin position="166"/>
        <end position="186"/>
    </location>
</feature>
<feature type="topological domain" description="Cytoplasmic; in external conformation" evidence="2">
    <location>
        <begin position="187"/>
        <end position="238"/>
    </location>
</feature>
<feature type="transmembrane region" description="Helical; Name=TM2" evidence="2">
    <location>
        <begin position="239"/>
        <end position="259"/>
    </location>
</feature>
<feature type="topological domain" description="Extracellular" evidence="2">
    <location>
        <begin position="260"/>
        <end position="292"/>
    </location>
</feature>
<feature type="transmembrane region" description="Helical; Name=TM3" evidence="2">
    <location>
        <begin position="293"/>
        <end position="313"/>
    </location>
</feature>
<feature type="topological domain" description="Cytoplasmic" evidence="2">
    <location>
        <begin position="314"/>
        <end position="330"/>
    </location>
</feature>
<feature type="region of interest" description="Pre-S">
    <location>
        <begin position="2"/>
        <end position="163"/>
    </location>
</feature>
<feature type="region of interest" description="Disordered" evidence="3">
    <location>
        <begin position="68"/>
        <end position="123"/>
    </location>
</feature>
<feature type="compositionally biased region" description="Basic and acidic residues" evidence="3">
    <location>
        <begin position="92"/>
        <end position="109"/>
    </location>
</feature>
<feature type="site" description="Cleavage; by host" evidence="2">
    <location>
        <begin position="240" status="uncertain"/>
        <end position="241" status="uncertain"/>
    </location>
</feature>
<feature type="lipid moiety-binding region" description="N-myristoyl glycine; by host" evidence="1">
    <location>
        <position position="2"/>
    </location>
</feature>
<feature type="glycosylation site" description="N-linked (GlcNAc...) asparagine; by host" evidence="2">
    <location>
        <position position="262"/>
    </location>
</feature>
<feature type="splice variant" id="VSP_031890" description="In isoform S." evidence="4">
    <location>
        <begin position="1"/>
        <end position="163"/>
    </location>
</feature>
<comment type="function">
    <text evidence="1">The large envelope protein exists in two topological conformations, one which is termed 'external' or Le-HBsAg and the other 'internal' or Li-HBsAg. In its external conformation the protein attaches the virus to cell receptors and thereby initiating infection. This interaction determines the species specificity and liver tropism. The large envelope protein probably also assumes fusion between virion and host membranes. In its internal conformation the protein plays a role in virion morphogenesis and mediates the contact with the nucleocapsid like a matrix protein (By similarity).</text>
</comment>
<comment type="function">
    <text evidence="1">Truncated S protein may be involved in translocation of pre-S domain through the virion membrane.</text>
</comment>
<comment type="subunit">
    <text evidence="1">Large internal envelope protein interacts with capsid protein.</text>
</comment>
<comment type="subcellular location">
    <subcellularLocation>
        <location>Virion membrane</location>
    </subcellularLocation>
</comment>
<comment type="alternative products">
    <event type="alternative initiation"/>
    <isoform>
        <id>P17195-1</id>
        <name>L</name>
        <name>Large envelope protein</name>
        <name>LHB</name>
        <name>L-HBsAg</name>
        <sequence type="displayed"/>
    </isoform>
    <isoform>
        <id>P17195-2</id>
        <name>S</name>
        <name>Small envelope protein</name>
        <name>SHB</name>
        <name>S-HBsAg</name>
        <sequence type="described" ref="VSP_031890"/>
    </isoform>
</comment>
<comment type="domain">
    <text>The large envelope protein is synthesized with the pre-S region at the cytosolic side of the endoplasmic reticulum and, hence will be within the virion after budding. Therefore the pre-S region is not N-glycosylated. Later a post-translational translocation of N-terminal pre-S and TM1 domains occur in about 50% of proteins at the virion surface. These molecules change their topology by an unknown mechanism, resulting in exposure of pre-S region at virion surface.</text>
</comment>
<comment type="PTM">
    <text>Myristoylation contributes importantly to DHBV infectivity. It is most likely required for an early step of the life cycle involving the entry or uncoating of virus particles.</text>
</comment>
<comment type="PTM">
    <text>Phosphorylated on pre-S domain for about 50% of L proteins, the L chains with internal pre-S region (Li-HBsAg).</text>
</comment>
<comment type="similarity">
    <text evidence="4">Belongs to the avihepadnavirus major surface antigen family.</text>
</comment>
<comment type="sequence caution" evidence="4">
    <conflict type="erroneous initiation">
        <sequence resource="EMBL-CDS" id="AAA45752"/>
    </conflict>
</comment>
<sequence length="330" mass="36787">MGQQPAKSMDVRRIEGGELLLNQLAGRMIPKGTVTWSGKFPTIDHLLDHVQTMEEVNTLQQQGAWPAGAGRRLGLTNPAPQEPPQPQWTPEEDQKAREAFRRYQEERPPETTTIPPTSPTPWKLQPGDDPLLENKSLLETHPLYQNPEPAVPVIKTPPLRKKKMAGTFGGILAGLIGLLVGFFLLIKILEILRRLDWWWISLSSPKGKMQCAFQDTGAQISPHYAGFCPWGCPGFLWTYLRLFIIFLLILLVAAGLLYLTDNMSIILGKLQWESVSALFSSISSLLPSDQKSLVALMFGLLLIWMTSSSATQTLVTLTQLATLSALFYKN</sequence>
<protein>
    <recommendedName>
        <fullName>Large envelope protein</fullName>
    </recommendedName>
    <alternativeName>
        <fullName>L glycoprotein</fullName>
    </alternativeName>
    <alternativeName>
        <fullName>L-HBsAg</fullName>
        <shortName>LHB</shortName>
    </alternativeName>
    <alternativeName>
        <fullName>Large S protein</fullName>
    </alternativeName>
    <alternativeName>
        <fullName>Large surface protein</fullName>
    </alternativeName>
    <alternativeName>
        <fullName>Major surface antigen</fullName>
    </alternativeName>
    <component>
        <recommendedName>
            <fullName>Truncated S protein</fullName>
            <shortName>St</shortName>
        </recommendedName>
    </component>
</protein>
<accession>P17195</accession>
<name>HBSAG_HPBDW</name>
<proteinExistence type="inferred from homology"/>
<organismHost>
    <name type="scientific">Anas</name>
    <name type="common">ducks</name>
    <dbReference type="NCBI Taxonomy" id="8835"/>
</organismHost>